<gene>
    <name evidence="1 5" type="primary">tdcC</name>
    <name type="ordered locus">b3116</name>
    <name type="ordered locus">JW3087</name>
</gene>
<name>TDCC_ECOLI</name>
<sequence length="443" mass="48879">MSTSDSIVSSQTKQSSWRKSDTTWTLGLFGTAIGAGVLFFPIRAGFGGLIPILLMLVLAYPIAFYCHRALARLCLSGSNPSGNITETVEEHFGKTGGVVITFLYFFAICPLLWIYGVTITNTFMTFWENQLGFAPLNRGFVALFLLLLMAFVIWFGKDLMVKVMSYLVWPFIASLVLISLSLIPYWNSAVIDQVDLGSLSLTGHDGILITVWLGISIMVFSFNFSPIVSSFVVSKREEYEKDFGRDFTERKCSQIISRASMLMVAVVMFFAFSCLFTLSPANMAEAKAQNIPVLSYLANHFASMTGTKTTFAITLEYAASIIALVAIFKSFFGHYLGTLEGLNGLVLKFGYKGDKTKVSLGKLNTISMIFIMGSTWVVAYANPNILDLIEAMGAPIIASLLCLLPMYAIRKAPSLAKYRGRLDNVFVTVIGLLTILNIVYKLF</sequence>
<comment type="function">
    <text evidence="1 3 4">Involved in the import of threonine and serine into the cell, with the concomitant import of a proton (symport system).</text>
</comment>
<comment type="catalytic activity">
    <reaction evidence="1 3">
        <text>L-threonine(in) + H(+)(in) = L-threonine(out) + H(+)(out)</text>
        <dbReference type="Rhea" id="RHEA:28883"/>
        <dbReference type="ChEBI" id="CHEBI:15378"/>
        <dbReference type="ChEBI" id="CHEBI:57926"/>
    </reaction>
    <physiologicalReaction direction="right-to-left" evidence="1 3">
        <dbReference type="Rhea" id="RHEA:28885"/>
    </physiologicalReaction>
</comment>
<comment type="catalytic activity">
    <reaction evidence="1 4 7">
        <text>L-serine(in) + H(+)(in) = L-serine(out) + H(+)(out)</text>
        <dbReference type="Rhea" id="RHEA:28887"/>
        <dbReference type="ChEBI" id="CHEBI:15378"/>
        <dbReference type="ChEBI" id="CHEBI:33384"/>
    </reaction>
    <physiologicalReaction direction="right-to-left" evidence="1 4 7">
        <dbReference type="Rhea" id="RHEA:28889"/>
    </physiologicalReaction>
</comment>
<comment type="activity regulation">
    <text evidence="3 4">Inhibited by the proton ionophore carbonyl cyanide m-chlorophenylhydrazone (CCCP) (PubMed:2115866, PubMed:9498571). Partially inhibited by the respiratory chain inhibitor KCN (PubMed:2115866). Activity is Na(+) independent (PubMed:2115866, PubMed:9498571).</text>
</comment>
<comment type="biophysicochemical properties">
    <kinetics>
        <KM evidence="3">6 uM for L-threonine</KM>
    </kinetics>
</comment>
<comment type="subcellular location">
    <subcellularLocation>
        <location evidence="1 2 3">Cell inner membrane</location>
        <topology evidence="1">Multi-pass membrane protein</topology>
    </subcellularLocation>
</comment>
<comment type="induction">
    <text evidence="3">Induced in amino acid-rich medium under anaerobic conditions.</text>
</comment>
<comment type="similarity">
    <text evidence="1">Belongs to the amino acid/polyamine transporter 2 family. SdaC/TdcC subfamily.</text>
</comment>
<protein>
    <recommendedName>
        <fullName evidence="1">Threonine/serine transporter TdcC</fullName>
    </recommendedName>
    <alternativeName>
        <fullName evidence="1">H(+)/threonine-serine symporter</fullName>
    </alternativeName>
</protein>
<proteinExistence type="evidence at protein level"/>
<reference key="1">
    <citation type="journal article" date="1989" name="Nucleic Acids Res.">
        <title>The complete nucleotide sequence of the tdc region of Escherichia coli.</title>
        <authorList>
            <person name="Schweizer H."/>
            <person name="Datta P."/>
        </authorList>
    </citation>
    <scope>NUCLEOTIDE SEQUENCE [GENOMIC DNA]</scope>
    <source>
        <strain>K12 / W3110 / ATCC 27325 / DSM 5911</strain>
    </source>
</reference>
<reference key="2">
    <citation type="journal article" date="1988" name="J. Bacteriol.">
        <title>Molecular characterization of the tdc operon of Escherichia coli K-12.</title>
        <authorList>
            <person name="Goss T.J."/>
            <person name="Schweizer H.P."/>
            <person name="Datta P."/>
        </authorList>
    </citation>
    <scope>NUCLEOTIDE SEQUENCE [GENOMIC DNA]</scope>
    <source>
        <strain>K12 / W3110 / ATCC 27325 / DSM 5911</strain>
    </source>
</reference>
<reference key="3">
    <citation type="journal article" date="1997" name="Science">
        <title>The complete genome sequence of Escherichia coli K-12.</title>
        <authorList>
            <person name="Blattner F.R."/>
            <person name="Plunkett G. III"/>
            <person name="Bloch C.A."/>
            <person name="Perna N.T."/>
            <person name="Burland V."/>
            <person name="Riley M."/>
            <person name="Collado-Vides J."/>
            <person name="Glasner J.D."/>
            <person name="Rode C.K."/>
            <person name="Mayhew G.F."/>
            <person name="Gregor J."/>
            <person name="Davis N.W."/>
            <person name="Kirkpatrick H.A."/>
            <person name="Goeden M.A."/>
            <person name="Rose D.J."/>
            <person name="Mau B."/>
            <person name="Shao Y."/>
        </authorList>
    </citation>
    <scope>NUCLEOTIDE SEQUENCE [LARGE SCALE GENOMIC DNA]</scope>
    <source>
        <strain>K12 / MG1655 / ATCC 47076</strain>
    </source>
</reference>
<reference key="4">
    <citation type="journal article" date="2006" name="Mol. Syst. Biol.">
        <title>Highly accurate genome sequences of Escherichia coli K-12 strains MG1655 and W3110.</title>
        <authorList>
            <person name="Hayashi K."/>
            <person name="Morooka N."/>
            <person name="Yamamoto Y."/>
            <person name="Fujita K."/>
            <person name="Isono K."/>
            <person name="Choi S."/>
            <person name="Ohtsubo E."/>
            <person name="Baba T."/>
            <person name="Wanner B.L."/>
            <person name="Mori H."/>
            <person name="Horiuchi T."/>
        </authorList>
    </citation>
    <scope>NUCLEOTIDE SEQUENCE [LARGE SCALE GENOMIC DNA]</scope>
    <source>
        <strain>K12 / W3110 / ATCC 27325 / DSM 5911</strain>
    </source>
</reference>
<reference key="5">
    <citation type="journal article" date="1990" name="J. Bacteriol.">
        <title>A novel membrane-associated threonine permease encoded by the tdcC gene of Escherichia coli.</title>
        <authorList>
            <person name="Sumantran V.N."/>
            <person name="Schweizer H.P."/>
            <person name="Datta P."/>
        </authorList>
    </citation>
    <scope>FUNCTION AS A THREONINE AND SERINE TRANSPORTER</scope>
    <scope>CATALYTIC ACTIVITY</scope>
    <scope>ACTIVITY REGULATION</scope>
    <scope>BIOPHYSICOCHEMICAL PROPERTIES</scope>
    <scope>SUBCELLULAR LOCATION</scope>
    <scope>INDUCTION</scope>
</reference>
<reference key="6">
    <citation type="journal article" date="1997" name="J. Biochem.">
        <title>Isolation and characterization of an Escherichia coli mutant lacking the major serine transporter, and cloning of a serine transporter gene.</title>
        <authorList>
            <person name="Ogawa W."/>
            <person name="Kayahara T."/>
            <person name="Tsuda M."/>
            <person name="Mizushima T."/>
            <person name="Tsuchiya T."/>
        </authorList>
    </citation>
    <scope>FUNCTION AS A SERINE TRANSPORTER</scope>
    <scope>CATALYTIC ACTIVITY</scope>
    <scope>ACTIVITY REGULATION</scope>
</reference>
<reference key="7">
    <citation type="journal article" date="2005" name="Science">
        <title>Global topology analysis of the Escherichia coli inner membrane proteome.</title>
        <authorList>
            <person name="Daley D.O."/>
            <person name="Rapp M."/>
            <person name="Granseth E."/>
            <person name="Melen K."/>
            <person name="Drew D."/>
            <person name="von Heijne G."/>
        </authorList>
    </citation>
    <scope>SUBCELLULAR LOCATION</scope>
    <source>
        <strain>K12 / MG1655 / ATCC 47076</strain>
    </source>
</reference>
<feature type="chain" id="PRO_0000093812" description="Threonine/serine transporter TdcC">
    <location>
        <begin position="1"/>
        <end position="443"/>
    </location>
</feature>
<feature type="transmembrane region" description="Helical" evidence="1">
    <location>
        <begin position="22"/>
        <end position="42"/>
    </location>
</feature>
<feature type="transmembrane region" description="Helical" evidence="1">
    <location>
        <begin position="44"/>
        <end position="64"/>
    </location>
</feature>
<feature type="transmembrane region" description="Helical" evidence="1">
    <location>
        <begin position="97"/>
        <end position="117"/>
    </location>
</feature>
<feature type="transmembrane region" description="Helical" evidence="1">
    <location>
        <begin position="140"/>
        <end position="160"/>
    </location>
</feature>
<feature type="transmembrane region" description="Helical" evidence="1">
    <location>
        <begin position="163"/>
        <end position="183"/>
    </location>
</feature>
<feature type="transmembrane region" description="Helical" evidence="1">
    <location>
        <begin position="207"/>
        <end position="227"/>
    </location>
</feature>
<feature type="transmembrane region" description="Helical" evidence="1">
    <location>
        <begin position="261"/>
        <end position="281"/>
    </location>
</feature>
<feature type="transmembrane region" description="Helical" evidence="1">
    <location>
        <begin position="311"/>
        <end position="331"/>
    </location>
</feature>
<feature type="transmembrane region" description="Helical" evidence="1">
    <location>
        <begin position="366"/>
        <end position="386"/>
    </location>
</feature>
<feature type="transmembrane region" description="Helical" evidence="1">
    <location>
        <begin position="389"/>
        <end position="409"/>
    </location>
</feature>
<feature type="transmembrane region" description="Helical" evidence="1">
    <location>
        <begin position="423"/>
        <end position="443"/>
    </location>
</feature>
<feature type="sequence conflict" description="In Ref. 1; CAA32594 and 2; AAA24662." evidence="6" ref="1 2">
    <location>
        <position position="70"/>
    </location>
</feature>
<feature type="sequence conflict" description="In Ref. 1; CAA32594 and 2; AAA24662." evidence="6" ref="1 2">
    <original>GLLTILNIVYKLF</original>
    <variation>VC</variation>
    <location>
        <begin position="431"/>
        <end position="443"/>
    </location>
</feature>
<organism>
    <name type="scientific">Escherichia coli (strain K12)</name>
    <dbReference type="NCBI Taxonomy" id="83333"/>
    <lineage>
        <taxon>Bacteria</taxon>
        <taxon>Pseudomonadati</taxon>
        <taxon>Pseudomonadota</taxon>
        <taxon>Gammaproteobacteria</taxon>
        <taxon>Enterobacterales</taxon>
        <taxon>Enterobacteriaceae</taxon>
        <taxon>Escherichia</taxon>
    </lineage>
</organism>
<keyword id="KW-0029">Amino-acid transport</keyword>
<keyword id="KW-0997">Cell inner membrane</keyword>
<keyword id="KW-1003">Cell membrane</keyword>
<keyword id="KW-0472">Membrane</keyword>
<keyword id="KW-1185">Reference proteome</keyword>
<keyword id="KW-0769">Symport</keyword>
<keyword id="KW-0812">Transmembrane</keyword>
<keyword id="KW-1133">Transmembrane helix</keyword>
<keyword id="KW-0813">Transport</keyword>
<dbReference type="EMBL" id="X14430">
    <property type="protein sequence ID" value="CAA32594.1"/>
    <property type="molecule type" value="Genomic_DNA"/>
</dbReference>
<dbReference type="EMBL" id="M23638">
    <property type="protein sequence ID" value="AAA24662.1"/>
    <property type="molecule type" value="Genomic_DNA"/>
</dbReference>
<dbReference type="EMBL" id="U18997">
    <property type="protein sequence ID" value="AAA57920.1"/>
    <property type="molecule type" value="Genomic_DNA"/>
</dbReference>
<dbReference type="EMBL" id="U00096">
    <property type="protein sequence ID" value="AAC76151.1"/>
    <property type="molecule type" value="Genomic_DNA"/>
</dbReference>
<dbReference type="EMBL" id="AP009048">
    <property type="protein sequence ID" value="BAE77165.1"/>
    <property type="molecule type" value="Genomic_DNA"/>
</dbReference>
<dbReference type="PIR" id="A65101">
    <property type="entry name" value="BVECTC"/>
</dbReference>
<dbReference type="RefSeq" id="NP_417586.1">
    <property type="nucleotide sequence ID" value="NC_000913.3"/>
</dbReference>
<dbReference type="RefSeq" id="WP_000107723.1">
    <property type="nucleotide sequence ID" value="NZ_LN832404.1"/>
</dbReference>
<dbReference type="SMR" id="P0AAD8"/>
<dbReference type="BioGRID" id="4262418">
    <property type="interactions" value="8"/>
</dbReference>
<dbReference type="DIP" id="DIP-48056N"/>
<dbReference type="FunCoup" id="P0AAD8">
    <property type="interactions" value="46"/>
</dbReference>
<dbReference type="IntAct" id="P0AAD8">
    <property type="interactions" value="1"/>
</dbReference>
<dbReference type="STRING" id="511145.b3116"/>
<dbReference type="TCDB" id="2.A.42.2.2">
    <property type="family name" value="the hydroxy/aromatic amino acid permease (haaap) family"/>
</dbReference>
<dbReference type="PaxDb" id="511145-b3116"/>
<dbReference type="EnsemblBacteria" id="AAC76151">
    <property type="protein sequence ID" value="AAC76151"/>
    <property type="gene ID" value="b3116"/>
</dbReference>
<dbReference type="GeneID" id="93778869"/>
<dbReference type="GeneID" id="947629"/>
<dbReference type="KEGG" id="ecj:JW3087"/>
<dbReference type="KEGG" id="eco:b3116"/>
<dbReference type="KEGG" id="ecoc:C3026_16995"/>
<dbReference type="PATRIC" id="fig|1411691.4.peg.3614"/>
<dbReference type="EchoBASE" id="EB0984"/>
<dbReference type="eggNOG" id="COG0814">
    <property type="taxonomic scope" value="Bacteria"/>
</dbReference>
<dbReference type="HOGENOM" id="CLU_052043_1_1_6"/>
<dbReference type="InParanoid" id="P0AAD8"/>
<dbReference type="OMA" id="SPQNMAE"/>
<dbReference type="OrthoDB" id="1627372at2"/>
<dbReference type="PhylomeDB" id="P0AAD8"/>
<dbReference type="BioCyc" id="EcoCyc:TDCC-MONOMER"/>
<dbReference type="BioCyc" id="MetaCyc:TDCC-MONOMER"/>
<dbReference type="PRO" id="PR:P0AAD8"/>
<dbReference type="Proteomes" id="UP000000625">
    <property type="component" value="Chromosome"/>
</dbReference>
<dbReference type="GO" id="GO:0005886">
    <property type="term" value="C:plasma membrane"/>
    <property type="evidence" value="ECO:0000314"/>
    <property type="project" value="EcoCyc"/>
</dbReference>
<dbReference type="GO" id="GO:0015194">
    <property type="term" value="F:L-serine transmembrane transporter activity"/>
    <property type="evidence" value="ECO:0000315"/>
    <property type="project" value="EcoCyc"/>
</dbReference>
<dbReference type="GO" id="GO:0015195">
    <property type="term" value="F:L-threonine transmembrane transporter activity"/>
    <property type="evidence" value="ECO:0000315"/>
    <property type="project" value="EcoCyc"/>
</dbReference>
<dbReference type="GO" id="GO:0015295">
    <property type="term" value="F:solute:proton symporter activity"/>
    <property type="evidence" value="ECO:0000314"/>
    <property type="project" value="EcoCyc"/>
</dbReference>
<dbReference type="GO" id="GO:0015565">
    <property type="term" value="F:threonine efflux transmembrane transporter activity"/>
    <property type="evidence" value="ECO:0007669"/>
    <property type="project" value="InterPro"/>
</dbReference>
<dbReference type="GO" id="GO:0022857">
    <property type="term" value="F:transmembrane transporter activity"/>
    <property type="evidence" value="ECO:0000318"/>
    <property type="project" value="GO_Central"/>
</dbReference>
<dbReference type="GO" id="GO:0006865">
    <property type="term" value="P:amino acid transport"/>
    <property type="evidence" value="ECO:0000315"/>
    <property type="project" value="EcoliWiki"/>
</dbReference>
<dbReference type="GO" id="GO:0015825">
    <property type="term" value="P:L-serine transport"/>
    <property type="evidence" value="ECO:0000315"/>
    <property type="project" value="EcoCyc"/>
</dbReference>
<dbReference type="GO" id="GO:0015826">
    <property type="term" value="P:threonine transport"/>
    <property type="evidence" value="ECO:0000315"/>
    <property type="project" value="EcoCyc"/>
</dbReference>
<dbReference type="HAMAP" id="MF_01583">
    <property type="entry name" value="Thr_Ser_transp_TdcC"/>
    <property type="match status" value="1"/>
</dbReference>
<dbReference type="InterPro" id="IPR018227">
    <property type="entry name" value="Amino_acid_transport_2"/>
</dbReference>
<dbReference type="InterPro" id="IPR004694">
    <property type="entry name" value="Hydroxy_aa_transpt"/>
</dbReference>
<dbReference type="InterPro" id="IPR023726">
    <property type="entry name" value="Thr/Ser_transpt_TdcC"/>
</dbReference>
<dbReference type="NCBIfam" id="NF010152">
    <property type="entry name" value="PRK13629.1"/>
    <property type="match status" value="1"/>
</dbReference>
<dbReference type="NCBIfam" id="TIGR00814">
    <property type="entry name" value="stp"/>
    <property type="match status" value="1"/>
</dbReference>
<dbReference type="PANTHER" id="PTHR35334">
    <property type="entry name" value="SERINE TRANSPORTER"/>
    <property type="match status" value="1"/>
</dbReference>
<dbReference type="PANTHER" id="PTHR35334:SF1">
    <property type="entry name" value="THREONINE_SERINE TRANSPORTER TDCC"/>
    <property type="match status" value="1"/>
</dbReference>
<dbReference type="Pfam" id="PF03222">
    <property type="entry name" value="Trp_Tyr_perm"/>
    <property type="match status" value="1"/>
</dbReference>
<evidence type="ECO:0000255" key="1">
    <source>
        <dbReference type="HAMAP-Rule" id="MF_01583"/>
    </source>
</evidence>
<evidence type="ECO:0000269" key="2">
    <source>
    </source>
</evidence>
<evidence type="ECO:0000269" key="3">
    <source>
    </source>
</evidence>
<evidence type="ECO:0000269" key="4">
    <source>
    </source>
</evidence>
<evidence type="ECO:0000303" key="5">
    <source>
    </source>
</evidence>
<evidence type="ECO:0000305" key="6"/>
<evidence type="ECO:0000305" key="7">
    <source>
    </source>
</evidence>
<accession>P0AAD8</accession>
<accession>P11867</accession>
<accession>Q2M991</accession>